<sequence>MLGVYLPIIVLVAVAVIFGLASLTFSSLIGQKKPSAVKLAPYECGCEPVGSARERFSVKFYIIAMLFILFDIEAVFMYPWSVLFKRLGIFGVVEMGLFIVILFVGYIYVWKKGALEWE</sequence>
<feature type="chain" id="PRO_0000362693" description="NADH-quinone oxidoreductase subunit A 1">
    <location>
        <begin position="1"/>
        <end position="118"/>
    </location>
</feature>
<feature type="transmembrane region" description="Helical" evidence="1">
    <location>
        <begin position="1"/>
        <end position="21"/>
    </location>
</feature>
<feature type="transmembrane region" description="Helical" evidence="1">
    <location>
        <begin position="60"/>
        <end position="80"/>
    </location>
</feature>
<feature type="transmembrane region" description="Helical" evidence="1">
    <location>
        <begin position="87"/>
        <end position="107"/>
    </location>
</feature>
<accession>Q74GA8</accession>
<organism>
    <name type="scientific">Geobacter sulfurreducens (strain ATCC 51573 / DSM 12127 / PCA)</name>
    <dbReference type="NCBI Taxonomy" id="243231"/>
    <lineage>
        <taxon>Bacteria</taxon>
        <taxon>Pseudomonadati</taxon>
        <taxon>Thermodesulfobacteriota</taxon>
        <taxon>Desulfuromonadia</taxon>
        <taxon>Geobacterales</taxon>
        <taxon>Geobacteraceae</taxon>
        <taxon>Geobacter</taxon>
    </lineage>
</organism>
<evidence type="ECO:0000255" key="1">
    <source>
        <dbReference type="HAMAP-Rule" id="MF_01394"/>
    </source>
</evidence>
<gene>
    <name evidence="1" type="primary">nuoA1</name>
    <name type="ordered locus">GSU0338</name>
</gene>
<reference key="1">
    <citation type="journal article" date="2003" name="Science">
        <title>Genome of Geobacter sulfurreducens: metal reduction in subsurface environments.</title>
        <authorList>
            <person name="Methe B.A."/>
            <person name="Nelson K.E."/>
            <person name="Eisen J.A."/>
            <person name="Paulsen I.T."/>
            <person name="Nelson W.C."/>
            <person name="Heidelberg J.F."/>
            <person name="Wu D."/>
            <person name="Wu M."/>
            <person name="Ward N.L."/>
            <person name="Beanan M.J."/>
            <person name="Dodson R.J."/>
            <person name="Madupu R."/>
            <person name="Brinkac L.M."/>
            <person name="Daugherty S.C."/>
            <person name="DeBoy R.T."/>
            <person name="Durkin A.S."/>
            <person name="Gwinn M.L."/>
            <person name="Kolonay J.F."/>
            <person name="Sullivan S.A."/>
            <person name="Haft D.H."/>
            <person name="Selengut J."/>
            <person name="Davidsen T.M."/>
            <person name="Zafar N."/>
            <person name="White O."/>
            <person name="Tran B."/>
            <person name="Romero C."/>
            <person name="Forberger H.A."/>
            <person name="Weidman J.F."/>
            <person name="Khouri H.M."/>
            <person name="Feldblyum T.V."/>
            <person name="Utterback T.R."/>
            <person name="Van Aken S.E."/>
            <person name="Lovley D.R."/>
            <person name="Fraser C.M."/>
        </authorList>
    </citation>
    <scope>NUCLEOTIDE SEQUENCE [LARGE SCALE GENOMIC DNA]</scope>
    <source>
        <strain>ATCC 51573 / DSM 12127 / PCA</strain>
    </source>
</reference>
<protein>
    <recommendedName>
        <fullName evidence="1">NADH-quinone oxidoreductase subunit A 1</fullName>
        <ecNumber evidence="1">7.1.1.-</ecNumber>
    </recommendedName>
    <alternativeName>
        <fullName evidence="1">NADH dehydrogenase I subunit A 1</fullName>
    </alternativeName>
    <alternativeName>
        <fullName evidence="1">NDH-1 subunit A 1</fullName>
    </alternativeName>
    <alternativeName>
        <fullName evidence="1">NUO1 1</fullName>
    </alternativeName>
</protein>
<keyword id="KW-0997">Cell inner membrane</keyword>
<keyword id="KW-1003">Cell membrane</keyword>
<keyword id="KW-0472">Membrane</keyword>
<keyword id="KW-0520">NAD</keyword>
<keyword id="KW-0874">Quinone</keyword>
<keyword id="KW-1185">Reference proteome</keyword>
<keyword id="KW-1278">Translocase</keyword>
<keyword id="KW-0812">Transmembrane</keyword>
<keyword id="KW-1133">Transmembrane helix</keyword>
<keyword id="KW-0813">Transport</keyword>
<keyword id="KW-0830">Ubiquinone</keyword>
<name>NUOA1_GEOSL</name>
<dbReference type="EC" id="7.1.1.-" evidence="1"/>
<dbReference type="EMBL" id="AE017180">
    <property type="protein sequence ID" value="AAR33671.1"/>
    <property type="molecule type" value="Genomic_DNA"/>
</dbReference>
<dbReference type="RefSeq" id="NP_951398.1">
    <property type="nucleotide sequence ID" value="NC_002939.5"/>
</dbReference>
<dbReference type="RefSeq" id="WP_010941006.1">
    <property type="nucleotide sequence ID" value="NC_002939.5"/>
</dbReference>
<dbReference type="SMR" id="Q74GA8"/>
<dbReference type="STRING" id="243231.GSU0338"/>
<dbReference type="DNASU" id="2686820"/>
<dbReference type="EnsemblBacteria" id="AAR33671">
    <property type="protein sequence ID" value="AAR33671"/>
    <property type="gene ID" value="GSU0338"/>
</dbReference>
<dbReference type="KEGG" id="gsu:GSU0338"/>
<dbReference type="PATRIC" id="fig|243231.5.peg.335"/>
<dbReference type="eggNOG" id="COG0838">
    <property type="taxonomic scope" value="Bacteria"/>
</dbReference>
<dbReference type="HOGENOM" id="CLU_119549_3_1_7"/>
<dbReference type="InParanoid" id="Q74GA8"/>
<dbReference type="OrthoDB" id="9791970at2"/>
<dbReference type="Proteomes" id="UP000000577">
    <property type="component" value="Chromosome"/>
</dbReference>
<dbReference type="GO" id="GO:0030964">
    <property type="term" value="C:NADH dehydrogenase complex"/>
    <property type="evidence" value="ECO:0000318"/>
    <property type="project" value="GO_Central"/>
</dbReference>
<dbReference type="GO" id="GO:0005886">
    <property type="term" value="C:plasma membrane"/>
    <property type="evidence" value="ECO:0007669"/>
    <property type="project" value="UniProtKB-SubCell"/>
</dbReference>
<dbReference type="GO" id="GO:0008137">
    <property type="term" value="F:NADH dehydrogenase (ubiquinone) activity"/>
    <property type="evidence" value="ECO:0000318"/>
    <property type="project" value="GO_Central"/>
</dbReference>
<dbReference type="GO" id="GO:0050136">
    <property type="term" value="F:NADH:ubiquinone reductase (non-electrogenic) activity"/>
    <property type="evidence" value="ECO:0007669"/>
    <property type="project" value="UniProtKB-UniRule"/>
</dbReference>
<dbReference type="GO" id="GO:0048038">
    <property type="term" value="F:quinone binding"/>
    <property type="evidence" value="ECO:0007669"/>
    <property type="project" value="UniProtKB-KW"/>
</dbReference>
<dbReference type="FunFam" id="1.20.58.1610:FF:000002">
    <property type="entry name" value="NADH-quinone oxidoreductase subunit A"/>
    <property type="match status" value="1"/>
</dbReference>
<dbReference type="Gene3D" id="1.20.58.1610">
    <property type="entry name" value="NADH:ubiquinone/plastoquinone oxidoreductase, chain 3"/>
    <property type="match status" value="1"/>
</dbReference>
<dbReference type="HAMAP" id="MF_01394">
    <property type="entry name" value="NDH1_NuoA"/>
    <property type="match status" value="1"/>
</dbReference>
<dbReference type="InterPro" id="IPR023043">
    <property type="entry name" value="NAD(P)H_OxRDtase_bac/plastid"/>
</dbReference>
<dbReference type="InterPro" id="IPR000440">
    <property type="entry name" value="NADH_UbQ/plastoQ_OxRdtase_su3"/>
</dbReference>
<dbReference type="InterPro" id="IPR038430">
    <property type="entry name" value="NDAH_ubi_oxred_su3_sf"/>
</dbReference>
<dbReference type="PANTHER" id="PTHR11058:SF22">
    <property type="entry name" value="NADH-QUINONE OXIDOREDUCTASE SUBUNIT A"/>
    <property type="match status" value="1"/>
</dbReference>
<dbReference type="PANTHER" id="PTHR11058">
    <property type="entry name" value="NADH-UBIQUINONE OXIDOREDUCTASE CHAIN 3"/>
    <property type="match status" value="1"/>
</dbReference>
<dbReference type="Pfam" id="PF00507">
    <property type="entry name" value="Oxidored_q4"/>
    <property type="match status" value="1"/>
</dbReference>
<proteinExistence type="inferred from homology"/>
<comment type="function">
    <text evidence="1">NDH-1 shuttles electrons from NADH, via FMN and iron-sulfur (Fe-S) centers, to quinones in the respiratory chain. The immediate electron acceptor for the enzyme in this species is believed to be ubiquinone. Couples the redox reaction to proton translocation (for every two electrons transferred, four hydrogen ions are translocated across the cytoplasmic membrane), and thus conserves the redox energy in a proton gradient.</text>
</comment>
<comment type="catalytic activity">
    <reaction evidence="1">
        <text>a quinone + NADH + 5 H(+)(in) = a quinol + NAD(+) + 4 H(+)(out)</text>
        <dbReference type="Rhea" id="RHEA:57888"/>
        <dbReference type="ChEBI" id="CHEBI:15378"/>
        <dbReference type="ChEBI" id="CHEBI:24646"/>
        <dbReference type="ChEBI" id="CHEBI:57540"/>
        <dbReference type="ChEBI" id="CHEBI:57945"/>
        <dbReference type="ChEBI" id="CHEBI:132124"/>
    </reaction>
</comment>
<comment type="subunit">
    <text evidence="1">NDH-1 is composed of 14 different subunits. Subunits NuoA, H, J, K, L, M, N constitute the membrane sector of the complex.</text>
</comment>
<comment type="subcellular location">
    <subcellularLocation>
        <location evidence="1">Cell inner membrane</location>
        <topology evidence="1">Multi-pass membrane protein</topology>
    </subcellularLocation>
</comment>
<comment type="similarity">
    <text evidence="1">Belongs to the complex I subunit 3 family.</text>
</comment>